<evidence type="ECO:0000250" key="1"/>
<evidence type="ECO:0000255" key="2"/>
<evidence type="ECO:0000305" key="3"/>
<gene>
    <name type="primary">gK</name>
    <name type="ordered locus">ORF6</name>
</gene>
<reference key="1">
    <citation type="journal article" date="1992" name="Virology">
        <title>The DNA sequence of equine herpesvirus-1.</title>
        <authorList>
            <person name="Telford E.A.R."/>
            <person name="Watson M.S."/>
            <person name="McBride K."/>
            <person name="Davison A.J."/>
        </authorList>
    </citation>
    <scope>NUCLEOTIDE SEQUENCE [LARGE SCALE GENOMIC DNA]</scope>
</reference>
<sequence>MLLGGRTAYLSVLGLITAYAAFTIWYTLTAQLHNPCVYATVSIDSKDGIAAKWEVYNSTIVYAYPENGAKRFSDGLSGFDYVCRENWVNESKLDVLKNMKELHDKVRIVVGTRNCRAYLWSVQLQMITGAWLIYIAFLCLRQERRLLGPFRNQNEFLSPTGYTFNYATYTLATTVLKTHYTKFALLLCEASLRRVALSRTFKRDPIGFLCEHSAALALIGLEVGTHFVARLLVVGTVTLVHTPCSQIYPIYLKLASWGFVVAVTIVEIVAIIYEKPPKTGSSANPPTPATHGVKGLCTSCCSTVLANLCGKLVYLLLVIGAVSILLHYEQRIQIGLLGESFSS</sequence>
<accession>Q6S6R5</accession>
<accession>P28933</accession>
<name>GK_EHV1B</name>
<keyword id="KW-0325">Glycoprotein</keyword>
<keyword id="KW-1032">Host cell membrane</keyword>
<keyword id="KW-1039">Host endosome</keyword>
<keyword id="KW-1040">Host Golgi apparatus</keyword>
<keyword id="KW-1043">Host membrane</keyword>
<keyword id="KW-0472">Membrane</keyword>
<keyword id="KW-1185">Reference proteome</keyword>
<keyword id="KW-0732">Signal</keyword>
<keyword id="KW-1180">Syncytium formation induced by viral infection</keyword>
<keyword id="KW-0812">Transmembrane</keyword>
<keyword id="KW-1133">Transmembrane helix</keyword>
<keyword id="KW-1181">Viral primary envelope fusion with host outer nuclear membrane</keyword>
<keyword id="KW-1188">Viral release from host cell</keyword>
<feature type="signal peptide" evidence="2">
    <location>
        <begin position="1"/>
        <end position="31"/>
    </location>
</feature>
<feature type="chain" id="PRO_0000038304" description="Envelope glycoprotein K">
    <location>
        <begin position="32"/>
        <end position="343"/>
    </location>
</feature>
<feature type="topological domain" description="Extracellular" evidence="2">
    <location>
        <begin position="32"/>
        <end position="118"/>
    </location>
</feature>
<feature type="transmembrane region" description="Helical" evidence="2">
    <location>
        <begin position="119"/>
        <end position="139"/>
    </location>
</feature>
<feature type="topological domain" description="Cytoplasmic" evidence="2">
    <location>
        <begin position="140"/>
        <end position="213"/>
    </location>
</feature>
<feature type="transmembrane region" description="Helical" evidence="2">
    <location>
        <begin position="214"/>
        <end position="234"/>
    </location>
</feature>
<feature type="topological domain" description="Extracellular" evidence="2">
    <location>
        <begin position="235"/>
        <end position="251"/>
    </location>
</feature>
<feature type="transmembrane region" description="Helical" evidence="2">
    <location>
        <begin position="252"/>
        <end position="272"/>
    </location>
</feature>
<feature type="topological domain" description="Cytoplasmic" evidence="2">
    <location>
        <begin position="273"/>
        <end position="303"/>
    </location>
</feature>
<feature type="transmembrane region" description="Helical" evidence="2">
    <location>
        <begin position="304"/>
        <end position="324"/>
    </location>
</feature>
<feature type="topological domain" description="Extracellular" evidence="2">
    <location>
        <begin position="325"/>
        <end position="343"/>
    </location>
</feature>
<feature type="glycosylation site" description="N-linked (GlcNAc...) asparagine; by host" evidence="2">
    <location>
        <position position="57"/>
    </location>
</feature>
<feature type="glycosylation site" description="N-linked (GlcNAc...) asparagine; by host" evidence="2">
    <location>
        <position position="89"/>
    </location>
</feature>
<protein>
    <recommendedName>
        <fullName>Envelope glycoprotein K</fullName>
    </recommendedName>
    <alternativeName>
        <fullName>Syncytial protein</fullName>
    </alternativeName>
</protein>
<comment type="function">
    <text evidence="1">Glycoprotein that probably modulates membrane fusion events during secondary envelopment of cytoplasmic capsids that bud into specific trans-Golgi network (TGN)-derived membranes.</text>
</comment>
<comment type="subunit">
    <text>Interacts (via UL20 interaction region) with protein UL20 homolog (via N-terminus); this interaction probably plays a role in the coordinate transport of protein UL20 homolog and gK to the trans-Golgi network (TGN), and is required for the cell surface expression of gK.</text>
</comment>
<comment type="subcellular location">
    <subcellularLocation>
        <location>Host cell membrane</location>
        <topology>Multi-pass membrane protein</topology>
    </subcellularLocation>
    <subcellularLocation>
        <location evidence="1">Host endosome membrane</location>
        <topology evidence="1">Multi-pass membrane protein</topology>
    </subcellularLocation>
    <subcellularLocation>
        <location evidence="1">Host Golgi apparatus membrane</location>
        <topology evidence="1">Multi-pass membrane protein</topology>
    </subcellularLocation>
    <text evidence="1">During virion morphogenesis, this protein probably accumulates in the endosomes and trans-Golgi where secondary envelopment occurs. It is probably transported with UL20 to the cell surface from where it is endocytosed and directed to the trans-Golgi network (TGN). Cell surface expression of gK is required for virus-induced cell-to-cell fusion. Likely not present in extracellular virions (By similarity).</text>
</comment>
<comment type="PTM">
    <text evidence="1">N-glycosylated.</text>
</comment>
<comment type="similarity">
    <text evidence="3">Belongs to the alphaherpesvirinae glycoprotein K family.</text>
</comment>
<organism>
    <name type="scientific">Equine herpesvirus 1 (strain Ab4p)</name>
    <name type="common">EHV-1</name>
    <name type="synonym">Equine abortion virus</name>
    <dbReference type="NCBI Taxonomy" id="31520"/>
    <lineage>
        <taxon>Viruses</taxon>
        <taxon>Duplodnaviria</taxon>
        <taxon>Heunggongvirae</taxon>
        <taxon>Peploviricota</taxon>
        <taxon>Herviviricetes</taxon>
        <taxon>Herpesvirales</taxon>
        <taxon>Orthoherpesviridae</taxon>
        <taxon>Alphaherpesvirinae</taxon>
        <taxon>Varicellovirus</taxon>
        <taxon>Varicellovirus equidalpha1</taxon>
        <taxon>Equid alphaherpesvirus 1</taxon>
    </lineage>
</organism>
<dbReference type="EMBL" id="AY665713">
    <property type="protein sequence ID" value="AAT67263.1"/>
    <property type="molecule type" value="Genomic_DNA"/>
</dbReference>
<dbReference type="PIR" id="G36795">
    <property type="entry name" value="MMBEA5"/>
</dbReference>
<dbReference type="RefSeq" id="YP_053051.1">
    <property type="nucleotide sequence ID" value="NC_001491.2"/>
</dbReference>
<dbReference type="SMR" id="Q6S6R5"/>
<dbReference type="GlyCosmos" id="Q6S6R5">
    <property type="glycosylation" value="2 sites, No reported glycans"/>
</dbReference>
<dbReference type="GeneID" id="1487514"/>
<dbReference type="KEGG" id="vg:1487514"/>
<dbReference type="Proteomes" id="UP000001189">
    <property type="component" value="Segment"/>
</dbReference>
<dbReference type="GO" id="GO:0044175">
    <property type="term" value="C:host cell endosome membrane"/>
    <property type="evidence" value="ECO:0007669"/>
    <property type="project" value="UniProtKB-SubCell"/>
</dbReference>
<dbReference type="GO" id="GO:0044178">
    <property type="term" value="C:host cell Golgi membrane"/>
    <property type="evidence" value="ECO:0007669"/>
    <property type="project" value="UniProtKB-SubCell"/>
</dbReference>
<dbReference type="GO" id="GO:0020002">
    <property type="term" value="C:host cell plasma membrane"/>
    <property type="evidence" value="ECO:0007669"/>
    <property type="project" value="UniProtKB-SubCell"/>
</dbReference>
<dbReference type="GO" id="GO:0016020">
    <property type="term" value="C:membrane"/>
    <property type="evidence" value="ECO:0007669"/>
    <property type="project" value="UniProtKB-KW"/>
</dbReference>
<dbReference type="GO" id="GO:0039700">
    <property type="term" value="P:fusion of viral membrane with host outer nuclear membrane"/>
    <property type="evidence" value="ECO:0007669"/>
    <property type="project" value="UniProtKB-KW"/>
</dbReference>
<dbReference type="GO" id="GO:0060141">
    <property type="term" value="P:symbiont-mediated induction of syncytium formation"/>
    <property type="evidence" value="ECO:0007669"/>
    <property type="project" value="UniProtKB-KW"/>
</dbReference>
<dbReference type="InterPro" id="IPR002567">
    <property type="entry name" value="GK"/>
</dbReference>
<dbReference type="Pfam" id="PF01621">
    <property type="entry name" value="Fusion_gly_K"/>
    <property type="match status" value="1"/>
</dbReference>
<organismHost>
    <name type="scientific">Equus caballus</name>
    <name type="common">Horse</name>
    <dbReference type="NCBI Taxonomy" id="9796"/>
</organismHost>
<proteinExistence type="inferred from homology"/>